<comment type="function">
    <text evidence="1">Excises uracil residues from the DNA which can arise as a result of misincorporation of dUMP residues by DNA polymerase or due to deamination of cytosine.</text>
</comment>
<comment type="catalytic activity">
    <reaction evidence="1">
        <text>Hydrolyzes single-stranded DNA or mismatched double-stranded DNA and polynucleotides, releasing free uracil.</text>
        <dbReference type="EC" id="3.2.2.27"/>
    </reaction>
</comment>
<comment type="subcellular location">
    <subcellularLocation>
        <location evidence="1">Cytoplasm</location>
    </subcellularLocation>
</comment>
<comment type="similarity">
    <text evidence="1">Belongs to the uracil-DNA glycosylase (UDG) superfamily. UNG family.</text>
</comment>
<name>UNG_CLOPE</name>
<keyword id="KW-0963">Cytoplasm</keyword>
<keyword id="KW-0227">DNA damage</keyword>
<keyword id="KW-0234">DNA repair</keyword>
<keyword id="KW-0378">Hydrolase</keyword>
<keyword id="KW-1185">Reference proteome</keyword>
<proteinExistence type="inferred from homology"/>
<protein>
    <recommendedName>
        <fullName evidence="1">Uracil-DNA glycosylase</fullName>
        <shortName evidence="1">UDG</shortName>
        <ecNumber evidence="1">3.2.2.27</ecNumber>
    </recommendedName>
</protein>
<evidence type="ECO:0000255" key="1">
    <source>
        <dbReference type="HAMAP-Rule" id="MF_00148"/>
    </source>
</evidence>
<dbReference type="EC" id="3.2.2.27" evidence="1"/>
<dbReference type="EMBL" id="BA000016">
    <property type="protein sequence ID" value="BAB79971.1"/>
    <property type="molecule type" value="Genomic_DNA"/>
</dbReference>
<dbReference type="RefSeq" id="WP_011009710.1">
    <property type="nucleotide sequence ID" value="NC_003366.1"/>
</dbReference>
<dbReference type="SMR" id="Q8XNR7"/>
<dbReference type="STRING" id="195102.gene:10489514"/>
<dbReference type="KEGG" id="cpe:CPE0265"/>
<dbReference type="HOGENOM" id="CLU_032162_3_0_9"/>
<dbReference type="Proteomes" id="UP000000818">
    <property type="component" value="Chromosome"/>
</dbReference>
<dbReference type="GO" id="GO:0005737">
    <property type="term" value="C:cytoplasm"/>
    <property type="evidence" value="ECO:0007669"/>
    <property type="project" value="UniProtKB-SubCell"/>
</dbReference>
<dbReference type="GO" id="GO:0004844">
    <property type="term" value="F:uracil DNA N-glycosylase activity"/>
    <property type="evidence" value="ECO:0007669"/>
    <property type="project" value="UniProtKB-UniRule"/>
</dbReference>
<dbReference type="GO" id="GO:0097510">
    <property type="term" value="P:base-excision repair, AP site formation via deaminated base removal"/>
    <property type="evidence" value="ECO:0007669"/>
    <property type="project" value="TreeGrafter"/>
</dbReference>
<dbReference type="CDD" id="cd10027">
    <property type="entry name" value="UDG-F1-like"/>
    <property type="match status" value="1"/>
</dbReference>
<dbReference type="FunFam" id="3.40.470.10:FF:000001">
    <property type="entry name" value="Uracil-DNA glycosylase"/>
    <property type="match status" value="1"/>
</dbReference>
<dbReference type="Gene3D" id="3.40.470.10">
    <property type="entry name" value="Uracil-DNA glycosylase-like domain"/>
    <property type="match status" value="1"/>
</dbReference>
<dbReference type="HAMAP" id="MF_00148">
    <property type="entry name" value="UDG"/>
    <property type="match status" value="1"/>
</dbReference>
<dbReference type="InterPro" id="IPR002043">
    <property type="entry name" value="UDG_fam1"/>
</dbReference>
<dbReference type="InterPro" id="IPR018085">
    <property type="entry name" value="Ura-DNA_Glyclase_AS"/>
</dbReference>
<dbReference type="InterPro" id="IPR005122">
    <property type="entry name" value="Uracil-DNA_glycosylase-like"/>
</dbReference>
<dbReference type="InterPro" id="IPR036895">
    <property type="entry name" value="Uracil-DNA_glycosylase-like_sf"/>
</dbReference>
<dbReference type="NCBIfam" id="NF003588">
    <property type="entry name" value="PRK05254.1-1"/>
    <property type="match status" value="1"/>
</dbReference>
<dbReference type="NCBIfam" id="NF003589">
    <property type="entry name" value="PRK05254.1-2"/>
    <property type="match status" value="1"/>
</dbReference>
<dbReference type="NCBIfam" id="NF003591">
    <property type="entry name" value="PRK05254.1-4"/>
    <property type="match status" value="1"/>
</dbReference>
<dbReference type="NCBIfam" id="NF003592">
    <property type="entry name" value="PRK05254.1-5"/>
    <property type="match status" value="1"/>
</dbReference>
<dbReference type="NCBIfam" id="TIGR00628">
    <property type="entry name" value="ung"/>
    <property type="match status" value="1"/>
</dbReference>
<dbReference type="PANTHER" id="PTHR11264">
    <property type="entry name" value="URACIL-DNA GLYCOSYLASE"/>
    <property type="match status" value="1"/>
</dbReference>
<dbReference type="PANTHER" id="PTHR11264:SF0">
    <property type="entry name" value="URACIL-DNA GLYCOSYLASE"/>
    <property type="match status" value="1"/>
</dbReference>
<dbReference type="Pfam" id="PF03167">
    <property type="entry name" value="UDG"/>
    <property type="match status" value="1"/>
</dbReference>
<dbReference type="SMART" id="SM00986">
    <property type="entry name" value="UDG"/>
    <property type="match status" value="1"/>
</dbReference>
<dbReference type="SMART" id="SM00987">
    <property type="entry name" value="UreE_C"/>
    <property type="match status" value="1"/>
</dbReference>
<dbReference type="SUPFAM" id="SSF52141">
    <property type="entry name" value="Uracil-DNA glycosylase-like"/>
    <property type="match status" value="1"/>
</dbReference>
<dbReference type="PROSITE" id="PS00130">
    <property type="entry name" value="U_DNA_GLYCOSYLASE"/>
    <property type="match status" value="1"/>
</dbReference>
<reference key="1">
    <citation type="journal article" date="2002" name="Proc. Natl. Acad. Sci. U.S.A.">
        <title>Complete genome sequence of Clostridium perfringens, an anaerobic flesh-eater.</title>
        <authorList>
            <person name="Shimizu T."/>
            <person name="Ohtani K."/>
            <person name="Hirakawa H."/>
            <person name="Ohshima K."/>
            <person name="Yamashita A."/>
            <person name="Shiba T."/>
            <person name="Ogasawara N."/>
            <person name="Hattori M."/>
            <person name="Kuhara S."/>
            <person name="Hayashi H."/>
        </authorList>
    </citation>
    <scope>NUCLEOTIDE SEQUENCE [LARGE SCALE GENOMIC DNA]</scope>
    <source>
        <strain>13 / Type A</strain>
    </source>
</reference>
<feature type="chain" id="PRO_0000176086" description="Uracil-DNA glycosylase">
    <location>
        <begin position="1"/>
        <end position="225"/>
    </location>
</feature>
<feature type="active site" description="Proton acceptor" evidence="1">
    <location>
        <position position="65"/>
    </location>
</feature>
<accession>Q8XNR7</accession>
<organism>
    <name type="scientific">Clostridium perfringens (strain 13 / Type A)</name>
    <dbReference type="NCBI Taxonomy" id="195102"/>
    <lineage>
        <taxon>Bacteria</taxon>
        <taxon>Bacillati</taxon>
        <taxon>Bacillota</taxon>
        <taxon>Clostridia</taxon>
        <taxon>Eubacteriales</taxon>
        <taxon>Clostridiaceae</taxon>
        <taxon>Clostridium</taxon>
    </lineage>
</organism>
<gene>
    <name evidence="1" type="primary">ung</name>
    <name type="ordered locus">CPE0265</name>
</gene>
<sequence>MAAEFNNDWDDLLKDEFKKEYYLNLRKFLINEYKTQKIHPSMYDIFNALKFTPYKDVKVVILGQDPYHGPNQAHGFSFSVKPGVQTPPSLRNMFKELNSDLGCYIPNNGFLESWAKQGILLLNTVLTVREGQANSHKGKGWEIFTDRVIELLNKREEPIVFILWGRNAISKEALITNPIHKIIKSVHPSPLSATRGFFGSKPFSKTNDFLVSINKEPIDWQIPNI</sequence>